<name>ZNT3_BOVIN</name>
<gene>
    <name evidence="3" type="primary">SLC30A3</name>
</gene>
<dbReference type="EMBL" id="BC123455">
    <property type="protein sequence ID" value="AAI23456.1"/>
    <property type="molecule type" value="mRNA"/>
</dbReference>
<dbReference type="RefSeq" id="NP_001070311.1">
    <property type="nucleotide sequence ID" value="NM_001076843.1"/>
</dbReference>
<dbReference type="SMR" id="Q08E25"/>
<dbReference type="FunCoup" id="Q08E25">
    <property type="interactions" value="85"/>
</dbReference>
<dbReference type="STRING" id="9913.ENSBTAP00000015117"/>
<dbReference type="PaxDb" id="9913-ENSBTAP00000015117"/>
<dbReference type="GeneID" id="512803"/>
<dbReference type="KEGG" id="bta:512803"/>
<dbReference type="CTD" id="7781"/>
<dbReference type="VEuPathDB" id="HostDB:ENSBTAG00000011381"/>
<dbReference type="eggNOG" id="KOG1482">
    <property type="taxonomic scope" value="Eukaryota"/>
</dbReference>
<dbReference type="HOGENOM" id="CLU_013430_0_1_1"/>
<dbReference type="InParanoid" id="Q08E25"/>
<dbReference type="OMA" id="RTWGWAR"/>
<dbReference type="OrthoDB" id="9944568at2759"/>
<dbReference type="TreeFam" id="TF313382"/>
<dbReference type="Proteomes" id="UP000009136">
    <property type="component" value="Chromosome 11"/>
</dbReference>
<dbReference type="Bgee" id="ENSBTAG00000011381">
    <property type="expression patterns" value="Expressed in caput epididymis and 71 other cell types or tissues"/>
</dbReference>
<dbReference type="GO" id="GO:0031902">
    <property type="term" value="C:late endosome membrane"/>
    <property type="evidence" value="ECO:0007669"/>
    <property type="project" value="UniProtKB-SubCell"/>
</dbReference>
<dbReference type="GO" id="GO:0005765">
    <property type="term" value="C:lysosomal membrane"/>
    <property type="evidence" value="ECO:0007669"/>
    <property type="project" value="UniProtKB-SubCell"/>
</dbReference>
<dbReference type="GO" id="GO:0043005">
    <property type="term" value="C:neuron projection"/>
    <property type="evidence" value="ECO:0000250"/>
    <property type="project" value="UniProtKB"/>
</dbReference>
<dbReference type="GO" id="GO:0005886">
    <property type="term" value="C:plasma membrane"/>
    <property type="evidence" value="ECO:0000318"/>
    <property type="project" value="GO_Central"/>
</dbReference>
<dbReference type="GO" id="GO:0008021">
    <property type="term" value="C:synaptic vesicle"/>
    <property type="evidence" value="ECO:0000250"/>
    <property type="project" value="UniProtKB"/>
</dbReference>
<dbReference type="GO" id="GO:0030672">
    <property type="term" value="C:synaptic vesicle membrane"/>
    <property type="evidence" value="ECO:0007669"/>
    <property type="project" value="UniProtKB-SubCell"/>
</dbReference>
<dbReference type="GO" id="GO:0015297">
    <property type="term" value="F:antiporter activity"/>
    <property type="evidence" value="ECO:0007669"/>
    <property type="project" value="UniProtKB-KW"/>
</dbReference>
<dbReference type="GO" id="GO:0046872">
    <property type="term" value="F:metal ion binding"/>
    <property type="evidence" value="ECO:0007669"/>
    <property type="project" value="UniProtKB-KW"/>
</dbReference>
<dbReference type="GO" id="GO:0005385">
    <property type="term" value="F:zinc ion transmembrane transporter activity"/>
    <property type="evidence" value="ECO:0000318"/>
    <property type="project" value="GO_Central"/>
</dbReference>
<dbReference type="GO" id="GO:0010043">
    <property type="term" value="P:response to zinc ion"/>
    <property type="evidence" value="ECO:0000318"/>
    <property type="project" value="GO_Central"/>
</dbReference>
<dbReference type="GO" id="GO:0071577">
    <property type="term" value="P:zinc ion transmembrane transport"/>
    <property type="evidence" value="ECO:0000250"/>
    <property type="project" value="UniProtKB"/>
</dbReference>
<dbReference type="FunFam" id="1.20.1510.10:FF:000002">
    <property type="entry name" value="zinc transporter 3 isoform X1"/>
    <property type="match status" value="1"/>
</dbReference>
<dbReference type="Gene3D" id="1.20.1510.10">
    <property type="entry name" value="Cation efflux protein transmembrane domain"/>
    <property type="match status" value="1"/>
</dbReference>
<dbReference type="InterPro" id="IPR002524">
    <property type="entry name" value="Cation_efflux"/>
</dbReference>
<dbReference type="InterPro" id="IPR036837">
    <property type="entry name" value="Cation_efflux_CTD_sf"/>
</dbReference>
<dbReference type="InterPro" id="IPR027469">
    <property type="entry name" value="Cation_efflux_TMD_sf"/>
</dbReference>
<dbReference type="InterPro" id="IPR050681">
    <property type="entry name" value="CDF/SLC30A"/>
</dbReference>
<dbReference type="NCBIfam" id="TIGR01297">
    <property type="entry name" value="CDF"/>
    <property type="match status" value="1"/>
</dbReference>
<dbReference type="PANTHER" id="PTHR11562">
    <property type="entry name" value="CATION EFFLUX PROTEIN/ ZINC TRANSPORTER"/>
    <property type="match status" value="1"/>
</dbReference>
<dbReference type="PANTHER" id="PTHR11562:SF30">
    <property type="entry name" value="PROTON-COUPLED ZINC ANTIPORTER SLC30A3-RELATED"/>
    <property type="match status" value="1"/>
</dbReference>
<dbReference type="Pfam" id="PF01545">
    <property type="entry name" value="Cation_efflux"/>
    <property type="match status" value="1"/>
</dbReference>
<dbReference type="SUPFAM" id="SSF160240">
    <property type="entry name" value="Cation efflux protein cytoplasmic domain-like"/>
    <property type="match status" value="1"/>
</dbReference>
<dbReference type="SUPFAM" id="SSF161111">
    <property type="entry name" value="Cation efflux protein transmembrane domain-like"/>
    <property type="match status" value="1"/>
</dbReference>
<keyword id="KW-0050">Antiport</keyword>
<keyword id="KW-0968">Cytoplasmic vesicle</keyword>
<keyword id="KW-0967">Endosome</keyword>
<keyword id="KW-0406">Ion transport</keyword>
<keyword id="KW-0458">Lysosome</keyword>
<keyword id="KW-0472">Membrane</keyword>
<keyword id="KW-0479">Metal-binding</keyword>
<keyword id="KW-1185">Reference proteome</keyword>
<keyword id="KW-0770">Synapse</keyword>
<keyword id="KW-0771">Synaptosome</keyword>
<keyword id="KW-0812">Transmembrane</keyword>
<keyword id="KW-1133">Transmembrane helix</keyword>
<keyword id="KW-0813">Transport</keyword>
<keyword id="KW-0862">Zinc</keyword>
<keyword id="KW-0864">Zinc transport</keyword>
<accession>Q08E25</accession>
<organism>
    <name type="scientific">Bos taurus</name>
    <name type="common">Bovine</name>
    <dbReference type="NCBI Taxonomy" id="9913"/>
    <lineage>
        <taxon>Eukaryota</taxon>
        <taxon>Metazoa</taxon>
        <taxon>Chordata</taxon>
        <taxon>Craniata</taxon>
        <taxon>Vertebrata</taxon>
        <taxon>Euteleostomi</taxon>
        <taxon>Mammalia</taxon>
        <taxon>Eutheria</taxon>
        <taxon>Laurasiatheria</taxon>
        <taxon>Artiodactyla</taxon>
        <taxon>Ruminantia</taxon>
        <taxon>Pecora</taxon>
        <taxon>Bovidae</taxon>
        <taxon>Bovinae</taxon>
        <taxon>Bos</taxon>
    </lineage>
</organism>
<sequence length="388" mass="41820">MEPSPTTGGSETTRLVGPRDRGGAGGGLRLKSLFTEAPEPLPEEPKPVEMSFHHCHRDPLPQPGLTPERMQAQRQLCTACAVCCVFMAGEVVGGYLAHSLAIMTDAAHLLADVGSMMGSLFSLWLSTRPATRTMTFGWHRSETLGALASVVSLWMVTGILLYLAFIRLLHSDYHIEGGAMLLTASIAVCANLLMAFVLHQAGPPHSHGSRGAEYAPLEEGSGEPLPLGNTSVRAAFVHVLGDLLQSLGVLIASILIYFKPQYKAADPISTFLFSICALGSTAPTLRDVLRVLMEGTPRSVSFEPVRDTLLSVPGVRAIHELHLWSLTFTHYVASAHLAIDSTADPEAVLAEATSRLHSRFGFSSCTLQVEQYQPEMAQCLRCQEPPQA</sequence>
<feature type="chain" id="PRO_0000283049" description="Probable proton-coupled zinc antiporter SLC30A3">
    <location>
        <begin position="1"/>
        <end position="388"/>
    </location>
</feature>
<feature type="topological domain" description="Cytoplasmic" evidence="6">
    <location>
        <begin position="1"/>
        <end position="75"/>
    </location>
</feature>
<feature type="transmembrane region" description="Helical" evidence="4">
    <location>
        <begin position="76"/>
        <end position="96"/>
    </location>
</feature>
<feature type="topological domain" description="Lumenal" evidence="6">
    <location>
        <begin position="97"/>
        <end position="105"/>
    </location>
</feature>
<feature type="transmembrane region" description="Helical" evidence="4">
    <location>
        <begin position="106"/>
        <end position="126"/>
    </location>
</feature>
<feature type="topological domain" description="Cytoplasmic" evidence="6">
    <location>
        <begin position="127"/>
        <end position="145"/>
    </location>
</feature>
<feature type="transmembrane region" description="Helical" evidence="4">
    <location>
        <begin position="146"/>
        <end position="166"/>
    </location>
</feature>
<feature type="topological domain" description="Lumenal" evidence="6">
    <location>
        <begin position="167"/>
        <end position="177"/>
    </location>
</feature>
<feature type="transmembrane region" description="Helical" evidence="4">
    <location>
        <begin position="178"/>
        <end position="198"/>
    </location>
</feature>
<feature type="topological domain" description="Cytoplasmic" evidence="6">
    <location>
        <begin position="199"/>
        <end position="235"/>
    </location>
</feature>
<feature type="transmembrane region" description="Helical" evidence="4">
    <location>
        <begin position="236"/>
        <end position="256"/>
    </location>
</feature>
<feature type="topological domain" description="Lumenal" evidence="6">
    <location>
        <begin position="257"/>
        <end position="264"/>
    </location>
</feature>
<feature type="transmembrane region" description="Helical" evidence="4">
    <location>
        <begin position="265"/>
        <end position="285"/>
    </location>
</feature>
<feature type="topological domain" description="Cytoplasmic" evidence="6">
    <location>
        <begin position="286"/>
        <end position="388"/>
    </location>
</feature>
<feature type="region of interest" description="Disordered" evidence="5">
    <location>
        <begin position="1"/>
        <end position="30"/>
    </location>
</feature>
<feature type="region of interest" description="Disordered" evidence="5">
    <location>
        <begin position="35"/>
        <end position="54"/>
    </location>
</feature>
<feature type="compositionally biased region" description="Polar residues" evidence="5">
    <location>
        <begin position="1"/>
        <end position="13"/>
    </location>
</feature>
<feature type="binding site" evidence="2">
    <location>
        <position position="108"/>
    </location>
    <ligand>
        <name>Zn(2+)</name>
        <dbReference type="ChEBI" id="CHEBI:29105"/>
        <note>transported zinc</note>
    </ligand>
</feature>
<feature type="binding site" evidence="2">
    <location>
        <position position="112"/>
    </location>
    <ligand>
        <name>Zn(2+)</name>
        <dbReference type="ChEBI" id="CHEBI:29105"/>
        <note>transported zinc</note>
    </ligand>
</feature>
<feature type="binding site" evidence="2">
    <location>
        <position position="238"/>
    </location>
    <ligand>
        <name>Zn(2+)</name>
        <dbReference type="ChEBI" id="CHEBI:29105"/>
        <note>transported zinc</note>
    </ligand>
</feature>
<feature type="binding site" evidence="2">
    <location>
        <position position="242"/>
    </location>
    <ligand>
        <name>Zn(2+)</name>
        <dbReference type="ChEBI" id="CHEBI:29105"/>
        <note>transported zinc</note>
    </ligand>
</feature>
<comment type="function">
    <text evidence="3">Probable proton-coupled zinc ion antiporter mediating the import of zinc from cytoplasm into synaptic vesicles and participating to cellular zinc ion homeostasis in the brain.</text>
</comment>
<comment type="catalytic activity">
    <reaction evidence="3">
        <text>Zn(2+)(in) + 2 H(+)(out) = Zn(2+)(out) + 2 H(+)(in)</text>
        <dbReference type="Rhea" id="RHEA:72627"/>
        <dbReference type="ChEBI" id="CHEBI:15378"/>
        <dbReference type="ChEBI" id="CHEBI:29105"/>
    </reaction>
</comment>
<comment type="subunit">
    <text evidence="3">Homodimer. Homodimerization could regulate efficiency of zinc transport. Interacts with TMEM163.</text>
</comment>
<comment type="subcellular location">
    <subcellularLocation>
        <location evidence="3">Cytoplasmic vesicle</location>
        <location evidence="3">Secretory vesicle</location>
        <location evidence="3">Synaptic vesicle membrane</location>
        <topology evidence="4">Multi-pass membrane protein</topology>
    </subcellularLocation>
    <subcellularLocation>
        <location evidence="1">Synapse</location>
        <location evidence="1">Synaptosome</location>
    </subcellularLocation>
    <subcellularLocation>
        <location evidence="3">Late endosome membrane</location>
        <topology evidence="4">Multi-pass membrane protein</topology>
    </subcellularLocation>
    <subcellularLocation>
        <location evidence="3">Lysosome membrane</location>
        <topology evidence="4">Multi-pass membrane protein</topology>
    </subcellularLocation>
</comment>
<comment type="similarity">
    <text evidence="6">Belongs to the cation diffusion facilitator (CDF) transporter (TC 2.A.4) family. SLC30A subfamily.</text>
</comment>
<protein>
    <recommendedName>
        <fullName evidence="6">Probable proton-coupled zinc antiporter SLC30A3</fullName>
    </recommendedName>
    <alternativeName>
        <fullName evidence="3">Solute carrier family 30 member 3</fullName>
    </alternativeName>
    <alternativeName>
        <fullName evidence="3">Zinc transporter 3</fullName>
        <shortName evidence="3">ZnT-3</shortName>
    </alternativeName>
</protein>
<evidence type="ECO:0000250" key="1">
    <source>
        <dbReference type="UniProtKB" id="P97441"/>
    </source>
</evidence>
<evidence type="ECO:0000250" key="2">
    <source>
        <dbReference type="UniProtKB" id="Q8IWU4"/>
    </source>
</evidence>
<evidence type="ECO:0000250" key="3">
    <source>
        <dbReference type="UniProtKB" id="Q99726"/>
    </source>
</evidence>
<evidence type="ECO:0000255" key="4"/>
<evidence type="ECO:0000256" key="5">
    <source>
        <dbReference type="SAM" id="MobiDB-lite"/>
    </source>
</evidence>
<evidence type="ECO:0000305" key="6"/>
<reference key="1">
    <citation type="submission" date="2006-09" db="EMBL/GenBank/DDBJ databases">
        <authorList>
            <consortium name="NIH - Mammalian Gene Collection (MGC) project"/>
        </authorList>
    </citation>
    <scope>NUCLEOTIDE SEQUENCE [LARGE SCALE MRNA]</scope>
    <source>
        <strain>Hereford</strain>
        <tissue>Thalamus</tissue>
    </source>
</reference>
<proteinExistence type="evidence at transcript level"/>